<proteinExistence type="evidence at protein level"/>
<feature type="chain" id="PRO_0000439081" description="N-terminal acetyltransferase B complex catalytic subunit NAA20">
    <location>
        <begin position="1"/>
        <end position="174"/>
    </location>
</feature>
<feature type="domain" description="N-acetyltransferase" evidence="1">
    <location>
        <begin position="2"/>
        <end position="151"/>
    </location>
</feature>
<feature type="sequence conflict" description="In Ref. 3; AAK62458/AAM10028." evidence="6" ref="3">
    <original>D</original>
    <variation>N</variation>
    <location>
        <position position="153"/>
    </location>
</feature>
<sequence>MTTIRRFSCNDLLRFTSVNLDHLTETFNMSFYMTYLARWPDYFHVAEGPGNRVMGYIMGKVEGQGESWHGHVTAVTVSPEYRRQQLAKKLMNLLEDISDKIDKAYFVDLFVRASNTPAIKMYEKLGYIIYRRVLRYYSGEEDGLDMRKALSRDVEKKSVIPLKRPITPDELEYD</sequence>
<name>NAA20_ARATH</name>
<evidence type="ECO:0000255" key="1">
    <source>
        <dbReference type="PROSITE-ProRule" id="PRU00532"/>
    </source>
</evidence>
<evidence type="ECO:0000269" key="2">
    <source>
    </source>
</evidence>
<evidence type="ECO:0000269" key="3">
    <source>
    </source>
</evidence>
<evidence type="ECO:0000303" key="4">
    <source>
    </source>
</evidence>
<evidence type="ECO:0000303" key="5">
    <source>
    </source>
</evidence>
<evidence type="ECO:0000305" key="6"/>
<evidence type="ECO:0000312" key="7">
    <source>
        <dbReference type="Araport" id="AT1G03150"/>
    </source>
</evidence>
<evidence type="ECO:0000312" key="8">
    <source>
        <dbReference type="EMBL" id="AAD25793.1"/>
    </source>
</evidence>
<protein>
    <recommendedName>
        <fullName evidence="5">N-terminal acetyltransferase B complex catalytic subunit NAA20</fullName>
        <ecNumber evidence="3">2.3.1.254</ecNumber>
    </recommendedName>
    <alternativeName>
        <fullName evidence="4">NatB N-alpha-terminal acetylation complex catalytic subunit</fullName>
    </alternativeName>
</protein>
<accession>Q8LGI8</accession>
<accession>Q94EZ1</accession>
<accession>Q9SA54</accession>
<gene>
    <name evidence="5" type="primary">NAA20</name>
    <name evidence="4" type="synonym">NBC</name>
    <name evidence="7" type="ordered locus">At1g03150</name>
    <name evidence="8" type="ORF">F10O3.2</name>
</gene>
<dbReference type="EC" id="2.3.1.254" evidence="3"/>
<dbReference type="EMBL" id="AC006550">
    <property type="protein sequence ID" value="AAD25793.1"/>
    <property type="status" value="ALT_SEQ"/>
    <property type="molecule type" value="Genomic_DNA"/>
</dbReference>
<dbReference type="EMBL" id="CP002684">
    <property type="protein sequence ID" value="AEE27536.1"/>
    <property type="molecule type" value="Genomic_DNA"/>
</dbReference>
<dbReference type="EMBL" id="AF387013">
    <property type="protein sequence ID" value="AAK62458.1"/>
    <property type="molecule type" value="mRNA"/>
</dbReference>
<dbReference type="EMBL" id="AY081466">
    <property type="protein sequence ID" value="AAM10028.1"/>
    <property type="molecule type" value="mRNA"/>
</dbReference>
<dbReference type="EMBL" id="AY084247">
    <property type="protein sequence ID" value="AAM60842.1"/>
    <property type="molecule type" value="mRNA"/>
</dbReference>
<dbReference type="PIR" id="F86162">
    <property type="entry name" value="F86162"/>
</dbReference>
<dbReference type="RefSeq" id="NP_563677.1">
    <property type="nucleotide sequence ID" value="NM_100197.3"/>
</dbReference>
<dbReference type="SMR" id="Q8LGI8"/>
<dbReference type="FunCoup" id="Q8LGI8">
    <property type="interactions" value="3709"/>
</dbReference>
<dbReference type="IntAct" id="Q8LGI8">
    <property type="interactions" value="2"/>
</dbReference>
<dbReference type="STRING" id="3702.Q8LGI8"/>
<dbReference type="GlyGen" id="Q8LGI8">
    <property type="glycosylation" value="1 site"/>
</dbReference>
<dbReference type="iPTMnet" id="Q8LGI8"/>
<dbReference type="PaxDb" id="3702-AT1G03150.1"/>
<dbReference type="ProteomicsDB" id="251343"/>
<dbReference type="EnsemblPlants" id="AT1G03150.1">
    <property type="protein sequence ID" value="AT1G03150.1"/>
    <property type="gene ID" value="AT1G03150"/>
</dbReference>
<dbReference type="GeneID" id="839562"/>
<dbReference type="Gramene" id="AT1G03150.1">
    <property type="protein sequence ID" value="AT1G03150.1"/>
    <property type="gene ID" value="AT1G03150"/>
</dbReference>
<dbReference type="KEGG" id="ath:AT1G03150"/>
<dbReference type="Araport" id="AT1G03150"/>
<dbReference type="TAIR" id="AT1G03150">
    <property type="gene designation" value="NAA20"/>
</dbReference>
<dbReference type="eggNOG" id="KOG3234">
    <property type="taxonomic scope" value="Eukaryota"/>
</dbReference>
<dbReference type="HOGENOM" id="CLU_013985_7_1_1"/>
<dbReference type="InParanoid" id="Q8LGI8"/>
<dbReference type="OMA" id="DAHDMRK"/>
<dbReference type="OrthoDB" id="10264728at2759"/>
<dbReference type="PhylomeDB" id="Q8LGI8"/>
<dbReference type="PRO" id="PR:Q8LGI8"/>
<dbReference type="Proteomes" id="UP000006548">
    <property type="component" value="Chromosome 1"/>
</dbReference>
<dbReference type="ExpressionAtlas" id="Q8LGI8">
    <property type="expression patterns" value="baseline and differential"/>
</dbReference>
<dbReference type="GO" id="GO:0120518">
    <property type="term" value="F:protein N-terminal-methionine acetyltransferase activity"/>
    <property type="evidence" value="ECO:0007669"/>
    <property type="project" value="UniProtKB-EC"/>
</dbReference>
<dbReference type="CDD" id="cd04301">
    <property type="entry name" value="NAT_SF"/>
    <property type="match status" value="1"/>
</dbReference>
<dbReference type="FunFam" id="3.40.630.30:FF:000034">
    <property type="entry name" value="N-alpha-acetyltransferase 20"/>
    <property type="match status" value="1"/>
</dbReference>
<dbReference type="Gene3D" id="3.40.630.30">
    <property type="match status" value="1"/>
</dbReference>
<dbReference type="InterPro" id="IPR016181">
    <property type="entry name" value="Acyl_CoA_acyltransferase"/>
</dbReference>
<dbReference type="InterPro" id="IPR000182">
    <property type="entry name" value="GNAT_dom"/>
</dbReference>
<dbReference type="InterPro" id="IPR051646">
    <property type="entry name" value="NatB_acetyltransferase_subunit"/>
</dbReference>
<dbReference type="PANTHER" id="PTHR45910">
    <property type="entry name" value="N-ALPHA-ACETYLTRANSFERASE 20"/>
    <property type="match status" value="1"/>
</dbReference>
<dbReference type="PANTHER" id="PTHR45910:SF1">
    <property type="entry name" value="N-ALPHA-ACETYLTRANSFERASE 20"/>
    <property type="match status" value="1"/>
</dbReference>
<dbReference type="Pfam" id="PF00583">
    <property type="entry name" value="Acetyltransf_1"/>
    <property type="match status" value="1"/>
</dbReference>
<dbReference type="SUPFAM" id="SSF55729">
    <property type="entry name" value="Acyl-CoA N-acyltransferases (Nat)"/>
    <property type="match status" value="1"/>
</dbReference>
<dbReference type="PROSITE" id="PS51186">
    <property type="entry name" value="GNAT"/>
    <property type="match status" value="1"/>
</dbReference>
<reference key="1">
    <citation type="journal article" date="2000" name="Nature">
        <title>Sequence and analysis of chromosome 1 of the plant Arabidopsis thaliana.</title>
        <authorList>
            <person name="Theologis A."/>
            <person name="Ecker J.R."/>
            <person name="Palm C.J."/>
            <person name="Federspiel N.A."/>
            <person name="Kaul S."/>
            <person name="White O."/>
            <person name="Alonso J."/>
            <person name="Altafi H."/>
            <person name="Araujo R."/>
            <person name="Bowman C.L."/>
            <person name="Brooks S.Y."/>
            <person name="Buehler E."/>
            <person name="Chan A."/>
            <person name="Chao Q."/>
            <person name="Chen H."/>
            <person name="Cheuk R.F."/>
            <person name="Chin C.W."/>
            <person name="Chung M.K."/>
            <person name="Conn L."/>
            <person name="Conway A.B."/>
            <person name="Conway A.R."/>
            <person name="Creasy T.H."/>
            <person name="Dewar K."/>
            <person name="Dunn P."/>
            <person name="Etgu P."/>
            <person name="Feldblyum T.V."/>
            <person name="Feng J.-D."/>
            <person name="Fong B."/>
            <person name="Fujii C.Y."/>
            <person name="Gill J.E."/>
            <person name="Goldsmith A.D."/>
            <person name="Haas B."/>
            <person name="Hansen N.F."/>
            <person name="Hughes B."/>
            <person name="Huizar L."/>
            <person name="Hunter J.L."/>
            <person name="Jenkins J."/>
            <person name="Johnson-Hopson C."/>
            <person name="Khan S."/>
            <person name="Khaykin E."/>
            <person name="Kim C.J."/>
            <person name="Koo H.L."/>
            <person name="Kremenetskaia I."/>
            <person name="Kurtz D.B."/>
            <person name="Kwan A."/>
            <person name="Lam B."/>
            <person name="Langin-Hooper S."/>
            <person name="Lee A."/>
            <person name="Lee J.M."/>
            <person name="Lenz C.A."/>
            <person name="Li J.H."/>
            <person name="Li Y.-P."/>
            <person name="Lin X."/>
            <person name="Liu S.X."/>
            <person name="Liu Z.A."/>
            <person name="Luros J.S."/>
            <person name="Maiti R."/>
            <person name="Marziali A."/>
            <person name="Militscher J."/>
            <person name="Miranda M."/>
            <person name="Nguyen M."/>
            <person name="Nierman W.C."/>
            <person name="Osborne B.I."/>
            <person name="Pai G."/>
            <person name="Peterson J."/>
            <person name="Pham P.K."/>
            <person name="Rizzo M."/>
            <person name="Rooney T."/>
            <person name="Rowley D."/>
            <person name="Sakano H."/>
            <person name="Salzberg S.L."/>
            <person name="Schwartz J.R."/>
            <person name="Shinn P."/>
            <person name="Southwick A.M."/>
            <person name="Sun H."/>
            <person name="Tallon L.J."/>
            <person name="Tambunga G."/>
            <person name="Toriumi M.J."/>
            <person name="Town C.D."/>
            <person name="Utterback T."/>
            <person name="Van Aken S."/>
            <person name="Vaysberg M."/>
            <person name="Vysotskaia V.S."/>
            <person name="Walker M."/>
            <person name="Wu D."/>
            <person name="Yu G."/>
            <person name="Fraser C.M."/>
            <person name="Venter J.C."/>
            <person name="Davis R.W."/>
        </authorList>
    </citation>
    <scope>NUCLEOTIDE SEQUENCE [LARGE SCALE GENOMIC DNA]</scope>
    <source>
        <strain>cv. Columbia</strain>
    </source>
</reference>
<reference key="2">
    <citation type="journal article" date="2017" name="Plant J.">
        <title>Araport11: a complete reannotation of the Arabidopsis thaliana reference genome.</title>
        <authorList>
            <person name="Cheng C.Y."/>
            <person name="Krishnakumar V."/>
            <person name="Chan A.P."/>
            <person name="Thibaud-Nissen F."/>
            <person name="Schobel S."/>
            <person name="Town C.D."/>
        </authorList>
    </citation>
    <scope>GENOME REANNOTATION</scope>
    <source>
        <strain>cv. Columbia</strain>
    </source>
</reference>
<reference key="3">
    <citation type="journal article" date="2003" name="Science">
        <title>Empirical analysis of transcriptional activity in the Arabidopsis genome.</title>
        <authorList>
            <person name="Yamada K."/>
            <person name="Lim J."/>
            <person name="Dale J.M."/>
            <person name="Chen H."/>
            <person name="Shinn P."/>
            <person name="Palm C.J."/>
            <person name="Southwick A.M."/>
            <person name="Wu H.C."/>
            <person name="Kim C.J."/>
            <person name="Nguyen M."/>
            <person name="Pham P.K."/>
            <person name="Cheuk R.F."/>
            <person name="Karlin-Newmann G."/>
            <person name="Liu S.X."/>
            <person name="Lam B."/>
            <person name="Sakano H."/>
            <person name="Wu T."/>
            <person name="Yu G."/>
            <person name="Miranda M."/>
            <person name="Quach H.L."/>
            <person name="Tripp M."/>
            <person name="Chang C.H."/>
            <person name="Lee J.M."/>
            <person name="Toriumi M.J."/>
            <person name="Chan M.M."/>
            <person name="Tang C.C."/>
            <person name="Onodera C.S."/>
            <person name="Deng J.M."/>
            <person name="Akiyama K."/>
            <person name="Ansari Y."/>
            <person name="Arakawa T."/>
            <person name="Banh J."/>
            <person name="Banno F."/>
            <person name="Bowser L."/>
            <person name="Brooks S.Y."/>
            <person name="Carninci P."/>
            <person name="Chao Q."/>
            <person name="Choy N."/>
            <person name="Enju A."/>
            <person name="Goldsmith A.D."/>
            <person name="Gurjal M."/>
            <person name="Hansen N.F."/>
            <person name="Hayashizaki Y."/>
            <person name="Johnson-Hopson C."/>
            <person name="Hsuan V.W."/>
            <person name="Iida K."/>
            <person name="Karnes M."/>
            <person name="Khan S."/>
            <person name="Koesema E."/>
            <person name="Ishida J."/>
            <person name="Jiang P.X."/>
            <person name="Jones T."/>
            <person name="Kawai J."/>
            <person name="Kamiya A."/>
            <person name="Meyers C."/>
            <person name="Nakajima M."/>
            <person name="Narusaka M."/>
            <person name="Seki M."/>
            <person name="Sakurai T."/>
            <person name="Satou M."/>
            <person name="Tamse R."/>
            <person name="Vaysberg M."/>
            <person name="Wallender E.K."/>
            <person name="Wong C."/>
            <person name="Yamamura Y."/>
            <person name="Yuan S."/>
            <person name="Shinozaki K."/>
            <person name="Davis R.W."/>
            <person name="Theologis A."/>
            <person name="Ecker J.R."/>
        </authorList>
    </citation>
    <scope>NUCLEOTIDE SEQUENCE [LARGE SCALE MRNA]</scope>
    <source>
        <strain>cv. Columbia</strain>
    </source>
</reference>
<reference key="4">
    <citation type="submission" date="2002-03" db="EMBL/GenBank/DDBJ databases">
        <title>Full-length cDNA from Arabidopsis thaliana.</title>
        <authorList>
            <person name="Brover V.V."/>
            <person name="Troukhan M.E."/>
            <person name="Alexandrov N.A."/>
            <person name="Lu Y.-P."/>
            <person name="Flavell R.B."/>
            <person name="Feldmann K.A."/>
        </authorList>
    </citation>
    <scope>NUCLEOTIDE SEQUENCE [LARGE SCALE MRNA]</scope>
</reference>
<reference key="5">
    <citation type="journal article" date="2013" name="PLoS ONE">
        <title>Mutation of an Arabidopsis NatB N-alpha-terminal acetylation complex component causes pleiotropic developmental defects.</title>
        <authorList>
            <person name="Ferrandez-Ayela A."/>
            <person name="Micol-Ponce R."/>
            <person name="Sanchez-Garcia A.B."/>
            <person name="Alonso-Peral M.M."/>
            <person name="Micol J.L."/>
            <person name="Ponce M.R."/>
        </authorList>
    </citation>
    <scope>DISRUPTION PHENOTYPE</scope>
</reference>
<reference key="6">
    <citation type="journal article" date="2015" name="Plant Cell">
        <title>Two N-terminal acetyltransferases antagonistically regulate the stability of a nod-like receptor in Arabidopsis.</title>
        <authorList>
            <person name="Xu F."/>
            <person name="Huang Y."/>
            <person name="Li L."/>
            <person name="Gannon P."/>
            <person name="Linster E."/>
            <person name="Huber M."/>
            <person name="Kapos P."/>
            <person name="Bienvenut W."/>
            <person name="Polevoda B."/>
            <person name="Meinnel T."/>
            <person name="Hell R."/>
            <person name="Giglione C."/>
            <person name="Zhang Y."/>
            <person name="Wirtz M."/>
            <person name="Chen S."/>
            <person name="Li X."/>
        </authorList>
    </citation>
    <scope>FUNCTION</scope>
    <scope>CATALYTIC ACTIVITY</scope>
</reference>
<comment type="function">
    <text evidence="3">Catalytic subunit of the NatB N-alpha-acetyltransferase complex. Involved in plant immunity through the regulation of SNC1 stability (PubMed:25966763).</text>
</comment>
<comment type="catalytic activity">
    <reaction evidence="3">
        <text>N-terminal L-methionyl-L-asparaginyl-[protein] + acetyl-CoA = N-terminal N(alpha)-acetyl-L-methionyl-L-asparaginyl-[protein] + CoA + H(+)</text>
        <dbReference type="Rhea" id="RHEA:50484"/>
        <dbReference type="Rhea" id="RHEA-COMP:12694"/>
        <dbReference type="Rhea" id="RHEA-COMP:12695"/>
        <dbReference type="ChEBI" id="CHEBI:15378"/>
        <dbReference type="ChEBI" id="CHEBI:57287"/>
        <dbReference type="ChEBI" id="CHEBI:57288"/>
        <dbReference type="ChEBI" id="CHEBI:133356"/>
        <dbReference type="ChEBI" id="CHEBI:133358"/>
        <dbReference type="EC" id="2.3.1.254"/>
    </reaction>
</comment>
<comment type="catalytic activity">
    <reaction evidence="3">
        <text>N-terminal L-methionyl-L-glutaminyl-[protein] + acetyl-CoA = N-terminal N(alpha)-acetyl-L-methionyl-L-glutaminyl-[protein] + CoA + H(+)</text>
        <dbReference type="Rhea" id="RHEA:50492"/>
        <dbReference type="Rhea" id="RHEA-COMP:12698"/>
        <dbReference type="Rhea" id="RHEA-COMP:12699"/>
        <dbReference type="ChEBI" id="CHEBI:15378"/>
        <dbReference type="ChEBI" id="CHEBI:57287"/>
        <dbReference type="ChEBI" id="CHEBI:57288"/>
        <dbReference type="ChEBI" id="CHEBI:133361"/>
        <dbReference type="ChEBI" id="CHEBI:133362"/>
        <dbReference type="EC" id="2.3.1.254"/>
    </reaction>
</comment>
<comment type="catalytic activity">
    <reaction evidence="3">
        <text>N-terminal L-methionyl-L-aspartyl-[protein] + acetyl-CoA = N-terminal N(alpha)-acetyl-L-methionyl-L-aspartyl-[protein] + CoA + H(+)</text>
        <dbReference type="Rhea" id="RHEA:50480"/>
        <dbReference type="Rhea" id="RHEA-COMP:12692"/>
        <dbReference type="Rhea" id="RHEA-COMP:12693"/>
        <dbReference type="ChEBI" id="CHEBI:15378"/>
        <dbReference type="ChEBI" id="CHEBI:57287"/>
        <dbReference type="ChEBI" id="CHEBI:57288"/>
        <dbReference type="ChEBI" id="CHEBI:133045"/>
        <dbReference type="ChEBI" id="CHEBI:133063"/>
        <dbReference type="EC" id="2.3.1.254"/>
    </reaction>
</comment>
<comment type="catalytic activity">
    <reaction evidence="3">
        <text>N-terminal L-methionyl-L-glutamyl-[protein] + acetyl-CoA = N-terminal N(alpha)-acetyl-L-methionyl-L-glutamyl-[protein] + CoA + H(+)</text>
        <dbReference type="Rhea" id="RHEA:50488"/>
        <dbReference type="Rhea" id="RHEA-COMP:12696"/>
        <dbReference type="Rhea" id="RHEA-COMP:12697"/>
        <dbReference type="ChEBI" id="CHEBI:15378"/>
        <dbReference type="ChEBI" id="CHEBI:57287"/>
        <dbReference type="ChEBI" id="CHEBI:57288"/>
        <dbReference type="ChEBI" id="CHEBI:133359"/>
        <dbReference type="ChEBI" id="CHEBI:133360"/>
        <dbReference type="EC" id="2.3.1.254"/>
    </reaction>
</comment>
<comment type="disruption phenotype">
    <text evidence="2">Reticulated leaves, early flowering and aborted or unfertilized ovules in siliques.</text>
</comment>
<comment type="similarity">
    <text evidence="6">Belongs to the acetyltransferase family. ARD1 subfamily.</text>
</comment>
<comment type="sequence caution" evidence="6">
    <conflict type="erroneous gene model prediction">
        <sequence resource="EMBL-CDS" id="AAD25793"/>
    </conflict>
</comment>
<keyword id="KW-0012">Acyltransferase</keyword>
<keyword id="KW-1185">Reference proteome</keyword>
<keyword id="KW-0808">Transferase</keyword>
<organism>
    <name type="scientific">Arabidopsis thaliana</name>
    <name type="common">Mouse-ear cress</name>
    <dbReference type="NCBI Taxonomy" id="3702"/>
    <lineage>
        <taxon>Eukaryota</taxon>
        <taxon>Viridiplantae</taxon>
        <taxon>Streptophyta</taxon>
        <taxon>Embryophyta</taxon>
        <taxon>Tracheophyta</taxon>
        <taxon>Spermatophyta</taxon>
        <taxon>Magnoliopsida</taxon>
        <taxon>eudicotyledons</taxon>
        <taxon>Gunneridae</taxon>
        <taxon>Pentapetalae</taxon>
        <taxon>rosids</taxon>
        <taxon>malvids</taxon>
        <taxon>Brassicales</taxon>
        <taxon>Brassicaceae</taxon>
        <taxon>Camelineae</taxon>
        <taxon>Arabidopsis</taxon>
    </lineage>
</organism>